<comment type="subunit">
    <text evidence="1">Part of a tripartite efflux system composed of MdtA, MdtB and MdtC.</text>
</comment>
<comment type="subcellular location">
    <subcellularLocation>
        <location evidence="1">Cell inner membrane</location>
        <topology evidence="1">Peripheral membrane protein</topology>
    </subcellularLocation>
</comment>
<comment type="similarity">
    <text evidence="1">Belongs to the membrane fusion protein (MFP) (TC 8.A.1) family.</text>
</comment>
<gene>
    <name evidence="1" type="primary">mdtA</name>
    <name type="ordered locus">EAM_2183</name>
</gene>
<dbReference type="EMBL" id="FN666575">
    <property type="protein sequence ID" value="CBJ46857.1"/>
    <property type="molecule type" value="Genomic_DNA"/>
</dbReference>
<dbReference type="RefSeq" id="WP_004158346.1">
    <property type="nucleotide sequence ID" value="NC_013971.1"/>
</dbReference>
<dbReference type="SMR" id="D4I6V2"/>
<dbReference type="KEGG" id="eay:EAM_2183"/>
<dbReference type="HOGENOM" id="CLU_018816_2_0_6"/>
<dbReference type="GO" id="GO:1990281">
    <property type="term" value="C:efflux pump complex"/>
    <property type="evidence" value="ECO:0007669"/>
    <property type="project" value="TreeGrafter"/>
</dbReference>
<dbReference type="GO" id="GO:0005886">
    <property type="term" value="C:plasma membrane"/>
    <property type="evidence" value="ECO:0007669"/>
    <property type="project" value="UniProtKB-SubCell"/>
</dbReference>
<dbReference type="GO" id="GO:0015562">
    <property type="term" value="F:efflux transmembrane transporter activity"/>
    <property type="evidence" value="ECO:0007669"/>
    <property type="project" value="TreeGrafter"/>
</dbReference>
<dbReference type="GO" id="GO:0009636">
    <property type="term" value="P:response to toxic substance"/>
    <property type="evidence" value="ECO:0007669"/>
    <property type="project" value="UniProtKB-ARBA"/>
</dbReference>
<dbReference type="FunFam" id="2.40.420.20:FF:000001">
    <property type="entry name" value="Efflux RND transporter periplasmic adaptor subunit"/>
    <property type="match status" value="1"/>
</dbReference>
<dbReference type="FunFam" id="1.10.287.470:FF:000005">
    <property type="entry name" value="Multidrug resistance protein MdtA"/>
    <property type="match status" value="1"/>
</dbReference>
<dbReference type="FunFam" id="2.40.30.170:FF:000006">
    <property type="entry name" value="Multidrug resistance protein MdtA"/>
    <property type="match status" value="1"/>
</dbReference>
<dbReference type="Gene3D" id="2.40.30.170">
    <property type="match status" value="1"/>
</dbReference>
<dbReference type="Gene3D" id="2.40.420.20">
    <property type="match status" value="1"/>
</dbReference>
<dbReference type="Gene3D" id="2.40.50.100">
    <property type="match status" value="1"/>
</dbReference>
<dbReference type="Gene3D" id="1.10.287.470">
    <property type="entry name" value="Helix hairpin bin"/>
    <property type="match status" value="1"/>
</dbReference>
<dbReference type="HAMAP" id="MF_01422">
    <property type="entry name" value="MdtA"/>
    <property type="match status" value="1"/>
</dbReference>
<dbReference type="InterPro" id="IPR032317">
    <property type="entry name" value="CusB_D23"/>
</dbReference>
<dbReference type="InterPro" id="IPR022824">
    <property type="entry name" value="Multidrug-R_MdtA"/>
</dbReference>
<dbReference type="InterPro" id="IPR006143">
    <property type="entry name" value="RND_pump_MFP"/>
</dbReference>
<dbReference type="NCBIfam" id="NF008589">
    <property type="entry name" value="PRK11556.1"/>
    <property type="match status" value="1"/>
</dbReference>
<dbReference type="NCBIfam" id="TIGR01730">
    <property type="entry name" value="RND_mfp"/>
    <property type="match status" value="1"/>
</dbReference>
<dbReference type="PANTHER" id="PTHR30469">
    <property type="entry name" value="MULTIDRUG RESISTANCE PROTEIN MDTA"/>
    <property type="match status" value="1"/>
</dbReference>
<dbReference type="PANTHER" id="PTHR30469:SF12">
    <property type="entry name" value="MULTIDRUG RESISTANCE PROTEIN MDTA"/>
    <property type="match status" value="1"/>
</dbReference>
<dbReference type="Pfam" id="PF16576">
    <property type="entry name" value="HlyD_D23"/>
    <property type="match status" value="1"/>
</dbReference>
<dbReference type="SUPFAM" id="SSF111369">
    <property type="entry name" value="HlyD-like secretion proteins"/>
    <property type="match status" value="1"/>
</dbReference>
<protein>
    <recommendedName>
        <fullName evidence="1">Multidrug resistance protein MdtA</fullName>
    </recommendedName>
    <alternativeName>
        <fullName evidence="1">Multidrug transporter MdtA</fullName>
    </alternativeName>
</protein>
<sequence length="405" mass="43060">MKTPRRFPLIALTVAAVLTAAALYWWYSHSTASTVQNRQGTEQQRASNSQGSAKRAGNAPPVQAAEALRQNVPQYLSGLGTVTAANTVTLRSRVDGDLVALHFNEGQEVAAGQLLAEIDPRPYEVALMQAEGQLAKDRATLTNARRDLARYEKLAQTQLVSAQELDTQRARVSETLGTIKADEGSVASARLNLTYSRVTAPIAGRVGLKQVDVGNYVSSGDANGIVVIAQTHPIDLVFSLPESDIASVLSAQKNGKLPVEAWDRNNKNLLTRGTLLSMDNQIDSTTGTVKLKARFDNQDDRLFPNQFVNARLKIGTLEDAIVIPAAALQMGNESHFVWVINGDSTVSKKIVASGLQGSGQVVISAGLQAGEKVVTDGIDRLTDGAQTEIVPAQASTPLPASGASS</sequence>
<name>MDTA_ERWAE</name>
<organism>
    <name type="scientific">Erwinia amylovora (strain ATCC 49946 / CCPPB 0273 / Ea273 / 27-3)</name>
    <dbReference type="NCBI Taxonomy" id="716540"/>
    <lineage>
        <taxon>Bacteria</taxon>
        <taxon>Pseudomonadati</taxon>
        <taxon>Pseudomonadota</taxon>
        <taxon>Gammaproteobacteria</taxon>
        <taxon>Enterobacterales</taxon>
        <taxon>Erwiniaceae</taxon>
        <taxon>Erwinia</taxon>
    </lineage>
</organism>
<keyword id="KW-0997">Cell inner membrane</keyword>
<keyword id="KW-1003">Cell membrane</keyword>
<keyword id="KW-0472">Membrane</keyword>
<keyword id="KW-0732">Signal</keyword>
<keyword id="KW-0813">Transport</keyword>
<proteinExistence type="inferred from homology"/>
<accession>D4I6V2</accession>
<reference key="1">
    <citation type="journal article" date="2010" name="J. Bacteriol.">
        <title>Complete genome sequence of the plant pathogen Erwinia amylovora strain ATCC 49946.</title>
        <authorList>
            <person name="Sebaihia M."/>
            <person name="Bocsanczy A.M."/>
            <person name="Biehl B.S."/>
            <person name="Quail M.A."/>
            <person name="Perna N.T."/>
            <person name="Glasner J.D."/>
            <person name="DeClerck G.A."/>
            <person name="Cartinhour S."/>
            <person name="Schneider D.J."/>
            <person name="Bentley S.D."/>
            <person name="Parkhill J."/>
            <person name="Beer S.V."/>
        </authorList>
    </citation>
    <scope>NUCLEOTIDE SEQUENCE [LARGE SCALE GENOMIC DNA]</scope>
    <source>
        <strain>ATCC 49946 / CCPPB 0273 / Ea273 / 27-3</strain>
    </source>
</reference>
<evidence type="ECO:0000255" key="1">
    <source>
        <dbReference type="HAMAP-Rule" id="MF_01422"/>
    </source>
</evidence>
<evidence type="ECO:0000256" key="2">
    <source>
        <dbReference type="SAM" id="MobiDB-lite"/>
    </source>
</evidence>
<feature type="signal peptide" evidence="1">
    <location>
        <begin position="1"/>
        <end position="22"/>
    </location>
</feature>
<feature type="chain" id="PRO_0000414045" description="Multidrug resistance protein MdtA">
    <location>
        <begin position="23"/>
        <end position="405"/>
    </location>
</feature>
<feature type="region of interest" description="Disordered" evidence="2">
    <location>
        <begin position="35"/>
        <end position="62"/>
    </location>
</feature>
<feature type="compositionally biased region" description="Polar residues" evidence="2">
    <location>
        <begin position="35"/>
        <end position="52"/>
    </location>
</feature>